<gene>
    <name evidence="7" type="primary">TPS5</name>
</gene>
<evidence type="ECO:0000250" key="1">
    <source>
        <dbReference type="UniProtKB" id="A0A0M3Q1Q3"/>
    </source>
</evidence>
<evidence type="ECO:0000250" key="2">
    <source>
        <dbReference type="UniProtKB" id="A0A1C9J6A7"/>
    </source>
</evidence>
<evidence type="ECO:0000250" key="3">
    <source>
        <dbReference type="UniProtKB" id="E2E2P0"/>
    </source>
</evidence>
<evidence type="ECO:0000250" key="4">
    <source>
        <dbReference type="UniProtKB" id="Q9X839"/>
    </source>
</evidence>
<evidence type="ECO:0000255" key="5"/>
<evidence type="ECO:0000269" key="6">
    <source>
    </source>
</evidence>
<evidence type="ECO:0000303" key="7">
    <source>
    </source>
</evidence>
<evidence type="ECO:0000305" key="8"/>
<name>ATPSC_THYCA</name>
<reference key="1">
    <citation type="journal article" date="2013" name="Planta">
        <title>Genomic characterization, molecular cloning and expression analysis of two terpene synthases from Thymus caespititius (Lamiaceae).</title>
        <authorList>
            <person name="Lima A.S."/>
            <person name="Schimmel J."/>
            <person name="Lukas B."/>
            <person name="Novak J."/>
            <person name="Barroso J.G."/>
            <person name="Figueiredo A.C."/>
            <person name="Pedro L.G."/>
            <person name="Degenhardt J."/>
            <person name="Trindade H."/>
        </authorList>
    </citation>
    <scope>NUCLEOTIDE SEQUENCE [GENOMIC DNA / MRNA] (ISOFORMS 1 AND 2)</scope>
    <scope>FUNCTION</scope>
    <scope>CATALYTIC ACTIVITY</scope>
    <scope>PATHWAY</scope>
    <source>
        <strain>cv. C2</strain>
        <tissue>Flower</tissue>
    </source>
</reference>
<organism>
    <name type="scientific">Thymus caespititius</name>
    <name type="common">Cretan thyme</name>
    <name type="synonym">Origanum caespititium</name>
    <dbReference type="NCBI Taxonomy" id="751871"/>
    <lineage>
        <taxon>Eukaryota</taxon>
        <taxon>Viridiplantae</taxon>
        <taxon>Streptophyta</taxon>
        <taxon>Embryophyta</taxon>
        <taxon>Tracheophyta</taxon>
        <taxon>Spermatophyta</taxon>
        <taxon>Magnoliopsida</taxon>
        <taxon>eudicotyledons</taxon>
        <taxon>Gunneridae</taxon>
        <taxon>Pentapetalae</taxon>
        <taxon>asterids</taxon>
        <taxon>lamiids</taxon>
        <taxon>Lamiales</taxon>
        <taxon>Lamiaceae</taxon>
        <taxon>Nepetoideae</taxon>
        <taxon>Mentheae</taxon>
        <taxon>Thymus</taxon>
    </lineage>
</organism>
<proteinExistence type="evidence at protein level"/>
<dbReference type="EC" id="4.2.3.-" evidence="6"/>
<dbReference type="EMBL" id="KC181096">
    <property type="protein sequence ID" value="AGK88251.1"/>
    <property type="molecule type" value="Genomic_DNA"/>
</dbReference>
<dbReference type="EMBL" id="KC181101">
    <property type="protein sequence ID" value="AGK88256.1"/>
    <property type="molecule type" value="mRNA"/>
</dbReference>
<dbReference type="EMBL" id="KC181104">
    <property type="protein sequence ID" value="AGK88259.1"/>
    <property type="molecule type" value="mRNA"/>
</dbReference>
<dbReference type="SMR" id="R4JQS2"/>
<dbReference type="UniPathway" id="UPA00213"/>
<dbReference type="GO" id="GO:0009507">
    <property type="term" value="C:chloroplast"/>
    <property type="evidence" value="ECO:0007669"/>
    <property type="project" value="UniProtKB-SubCell"/>
</dbReference>
<dbReference type="GO" id="GO:0000287">
    <property type="term" value="F:magnesium ion binding"/>
    <property type="evidence" value="ECO:0007669"/>
    <property type="project" value="InterPro"/>
</dbReference>
<dbReference type="GO" id="GO:0042803">
    <property type="term" value="F:protein homodimerization activity"/>
    <property type="evidence" value="ECO:0000250"/>
    <property type="project" value="UniProtKB"/>
</dbReference>
<dbReference type="GO" id="GO:0010333">
    <property type="term" value="F:terpene synthase activity"/>
    <property type="evidence" value="ECO:0007669"/>
    <property type="project" value="InterPro"/>
</dbReference>
<dbReference type="GO" id="GO:0016102">
    <property type="term" value="P:diterpenoid biosynthetic process"/>
    <property type="evidence" value="ECO:0007669"/>
    <property type="project" value="InterPro"/>
</dbReference>
<dbReference type="CDD" id="cd00684">
    <property type="entry name" value="Terpene_cyclase_plant_C1"/>
    <property type="match status" value="1"/>
</dbReference>
<dbReference type="FunFam" id="1.10.600.10:FF:000007">
    <property type="entry name" value="Isoprene synthase, chloroplastic"/>
    <property type="match status" value="1"/>
</dbReference>
<dbReference type="FunFam" id="1.50.10.130:FF:000001">
    <property type="entry name" value="Isoprene synthase, chloroplastic"/>
    <property type="match status" value="1"/>
</dbReference>
<dbReference type="Gene3D" id="1.10.600.10">
    <property type="entry name" value="Farnesyl Diphosphate Synthase"/>
    <property type="match status" value="1"/>
</dbReference>
<dbReference type="Gene3D" id="1.50.10.130">
    <property type="entry name" value="Terpene synthase, N-terminal domain"/>
    <property type="match status" value="1"/>
</dbReference>
<dbReference type="InterPro" id="IPR008949">
    <property type="entry name" value="Isoprenoid_synthase_dom_sf"/>
</dbReference>
<dbReference type="InterPro" id="IPR034741">
    <property type="entry name" value="Terpene_cyclase-like_1_C"/>
</dbReference>
<dbReference type="InterPro" id="IPR044814">
    <property type="entry name" value="Terpene_cyclase_plant_C1"/>
</dbReference>
<dbReference type="InterPro" id="IPR001906">
    <property type="entry name" value="Terpene_synth_N"/>
</dbReference>
<dbReference type="InterPro" id="IPR036965">
    <property type="entry name" value="Terpene_synth_N_sf"/>
</dbReference>
<dbReference type="InterPro" id="IPR050148">
    <property type="entry name" value="Terpene_synthase-like"/>
</dbReference>
<dbReference type="InterPro" id="IPR005630">
    <property type="entry name" value="Terpene_synthase_metal-bd"/>
</dbReference>
<dbReference type="InterPro" id="IPR008930">
    <property type="entry name" value="Terpenoid_cyclase/PrenylTrfase"/>
</dbReference>
<dbReference type="PANTHER" id="PTHR31225">
    <property type="entry name" value="OS04G0344100 PROTEIN-RELATED"/>
    <property type="match status" value="1"/>
</dbReference>
<dbReference type="PANTHER" id="PTHR31225:SF9">
    <property type="entry name" value="TERPENE SYNTHASE 10"/>
    <property type="match status" value="1"/>
</dbReference>
<dbReference type="Pfam" id="PF01397">
    <property type="entry name" value="Terpene_synth"/>
    <property type="match status" value="1"/>
</dbReference>
<dbReference type="Pfam" id="PF03936">
    <property type="entry name" value="Terpene_synth_C"/>
    <property type="match status" value="1"/>
</dbReference>
<dbReference type="SFLD" id="SFLDS00005">
    <property type="entry name" value="Isoprenoid_Synthase_Type_I"/>
    <property type="match status" value="1"/>
</dbReference>
<dbReference type="SFLD" id="SFLDG01019">
    <property type="entry name" value="Terpene_Cyclase_Like_1_C_Termi"/>
    <property type="match status" value="1"/>
</dbReference>
<dbReference type="SUPFAM" id="SSF48239">
    <property type="entry name" value="Terpenoid cyclases/Protein prenyltransferases"/>
    <property type="match status" value="1"/>
</dbReference>
<dbReference type="SUPFAM" id="SSF48576">
    <property type="entry name" value="Terpenoid synthases"/>
    <property type="match status" value="1"/>
</dbReference>
<protein>
    <recommendedName>
        <fullName evidence="7">Alpha-terpineol synthase, chloroplastic</fullName>
        <ecNumber evidence="6">4.2.3.-</ecNumber>
    </recommendedName>
    <alternativeName>
        <fullName evidence="7">Terpene synthase 5</fullName>
        <shortName evidence="7">TcTPS5</shortName>
    </alternativeName>
</protein>
<keyword id="KW-0025">Alternative splicing</keyword>
<keyword id="KW-0150">Chloroplast</keyword>
<keyword id="KW-0456">Lyase</keyword>
<keyword id="KW-0460">Magnesium</keyword>
<keyword id="KW-0464">Manganese</keyword>
<keyword id="KW-0479">Metal-binding</keyword>
<keyword id="KW-0934">Plastid</keyword>
<keyword id="KW-0809">Transit peptide</keyword>
<accession>R4JQS2</accession>
<accession>R4JHV9</accession>
<accession>R4JQS8</accession>
<feature type="transit peptide" description="Chloroplast" evidence="5">
    <location>
        <begin position="1"/>
        <end position="47"/>
    </location>
</feature>
<feature type="chain" id="PRO_0000453316" description="Alpha-terpineol synthase, chloroplastic">
    <location>
        <begin position="48"/>
        <end position="601"/>
    </location>
</feature>
<feature type="region of interest" description="Homodimerization" evidence="1">
    <location>
        <begin position="363"/>
        <end position="369"/>
    </location>
</feature>
<feature type="region of interest" description="Homodimerization" evidence="1">
    <location>
        <begin position="435"/>
        <end position="471"/>
    </location>
</feature>
<feature type="short sequence motif" description="DDXXD motif" evidence="4">
    <location>
        <begin position="357"/>
        <end position="361"/>
    </location>
</feature>
<feature type="binding site" evidence="2">
    <location>
        <position position="357"/>
    </location>
    <ligand>
        <name>Mn(2+)</name>
        <dbReference type="ChEBI" id="CHEBI:29035"/>
        <label>1</label>
    </ligand>
</feature>
<feature type="binding site" evidence="2">
    <location>
        <position position="357"/>
    </location>
    <ligand>
        <name>Mn(2+)</name>
        <dbReference type="ChEBI" id="CHEBI:29035"/>
        <label>2</label>
    </ligand>
</feature>
<feature type="binding site" evidence="2">
    <location>
        <position position="361"/>
    </location>
    <ligand>
        <name>Mn(2+)</name>
        <dbReference type="ChEBI" id="CHEBI:29035"/>
        <label>1</label>
    </ligand>
</feature>
<feature type="binding site" evidence="2">
    <location>
        <position position="361"/>
    </location>
    <ligand>
        <name>Mn(2+)</name>
        <dbReference type="ChEBI" id="CHEBI:29035"/>
        <label>2</label>
    </ligand>
</feature>
<feature type="binding site" evidence="2">
    <location>
        <position position="499"/>
    </location>
    <ligand>
        <name>Mn(2+)</name>
        <dbReference type="ChEBI" id="CHEBI:29035"/>
        <label>3</label>
    </ligand>
</feature>
<feature type="binding site" evidence="2">
    <location>
        <position position="507"/>
    </location>
    <ligand>
        <name>Mn(2+)</name>
        <dbReference type="ChEBI" id="CHEBI:29035"/>
        <label>3</label>
    </ligand>
</feature>
<feature type="splice variant" id="VSP_061123" description="In isoform 2.">
    <original>MSTISIHHVGILRNPLHSKSKRASINKPWSLSLPRSSSASRLVEPC</original>
    <variation>M</variation>
    <location>
        <begin position="1"/>
        <end position="46"/>
    </location>
</feature>
<feature type="sequence conflict" description="In Ref. 1; AGK88259." evidence="8" ref="1">
    <original>D</original>
    <variation>N</variation>
    <location>
        <position position="74"/>
    </location>
</feature>
<feature type="sequence conflict" description="In Ref. 1; AGK88256." evidence="8" ref="1">
    <original>E</original>
    <variation>K</variation>
    <location>
        <position position="89"/>
    </location>
</feature>
<feature type="sequence conflict" description="In Ref. 1; AGK88256." evidence="8" ref="1">
    <original>I</original>
    <variation>M</variation>
    <location>
        <position position="103"/>
    </location>
</feature>
<feature type="sequence conflict" description="In Ref. 1; AGK88259." evidence="8" ref="1">
    <original>V</original>
    <variation>L</variation>
    <location>
        <position position="153"/>
    </location>
</feature>
<feature type="sequence conflict" description="In Ref. 1; AGK88256." evidence="8" ref="1">
    <original>S</original>
    <variation>P</variation>
    <location>
        <position position="174"/>
    </location>
</feature>
<feature type="sequence conflict" description="In Ref. 1; AGK88256." evidence="8" ref="1">
    <original>A</original>
    <variation>V</variation>
    <location>
        <position position="207"/>
    </location>
</feature>
<feature type="sequence conflict" description="In Ref. 1; AGK88256." evidence="8" ref="1">
    <original>K</original>
    <variation>Q</variation>
    <location>
        <position position="232"/>
    </location>
</feature>
<feature type="sequence conflict" description="In Ref. 1; AGK88259." evidence="8" ref="1">
    <original>NEGRISDE</original>
    <variation>DEGSISDG</variation>
    <location>
        <begin position="234"/>
        <end position="241"/>
    </location>
</feature>
<feature type="sequence conflict" description="In Ref. 1; AGK88256." evidence="8" ref="1">
    <original>S</original>
    <variation>L</variation>
    <location>
        <position position="245"/>
    </location>
</feature>
<feature type="sequence conflict" description="In Ref. 1; AGK88256." evidence="8" ref="1">
    <original>H</original>
    <variation>R</variation>
    <location>
        <position position="256"/>
    </location>
</feature>
<feature type="sequence conflict" description="In Ref. 1; AGK88256." evidence="8" ref="1">
    <original>V</original>
    <variation>A</variation>
    <location>
        <position position="273"/>
    </location>
</feature>
<feature type="sequence conflict" description="In Ref. 1; AGK88256." evidence="8" ref="1">
    <original>I</original>
    <variation>V</variation>
    <location>
        <position position="281"/>
    </location>
</feature>
<feature type="sequence conflict" description="In Ref. 1; AGK88256." evidence="8" ref="1">
    <original>VSRG</original>
    <variation>ASRW</variation>
    <location>
        <begin position="303"/>
        <end position="306"/>
    </location>
</feature>
<feature type="sequence conflict" description="In Ref. 1; AGK88256." evidence="8" ref="1">
    <original>NT</original>
    <variation>YI</variation>
    <location>
        <begin position="349"/>
        <end position="350"/>
    </location>
</feature>
<feature type="sequence conflict" description="In Ref. 1; AGK88256." evidence="8" ref="1">
    <original>Y</original>
    <variation>H</variation>
    <location>
        <position position="399"/>
    </location>
</feature>
<feature type="sequence conflict" description="In Ref. 1; AGK88256." evidence="8" ref="1">
    <original>LKDH</original>
    <variation>FKDR</variation>
    <location>
        <begin position="410"/>
        <end position="413"/>
    </location>
</feature>
<feature type="sequence conflict" description="In Ref. 1; AGK88256." evidence="8" ref="1">
    <original>K</original>
    <variation>Q</variation>
    <location>
        <position position="440"/>
    </location>
</feature>
<feature type="sequence conflict" description="In Ref. 1; AGK88256." evidence="8" ref="1">
    <original>ASLT</original>
    <variation>GSLP</variation>
    <location>
        <begin position="459"/>
        <end position="462"/>
    </location>
</feature>
<feature type="sequence conflict" description="In Ref. 1; AGK88256." evidence="8" ref="1">
    <original>R</original>
    <variation>Q</variation>
    <location>
        <position position="532"/>
    </location>
</feature>
<feature type="sequence conflict" description="In Ref. 1; AGK88256." evidence="8" ref="1">
    <original>GET</original>
    <variation>REA</variation>
    <location>
        <begin position="540"/>
        <end position="542"/>
    </location>
</feature>
<feature type="sequence conflict" description="In Ref. 1; AGK88256." evidence="8" ref="1">
    <original>K</original>
    <variation>E</variation>
    <location>
        <position position="552"/>
    </location>
</feature>
<feature type="sequence conflict" description="In Ref. 1; AGK88259." evidence="8" ref="1">
    <original>D</original>
    <variation>E</variation>
    <location>
        <position position="554"/>
    </location>
</feature>
<feature type="sequence conflict" description="In Ref. 1; AGK88256." evidence="8" ref="1">
    <original>L</original>
    <variation>I</variation>
    <location>
        <position position="569"/>
    </location>
</feature>
<feature type="sequence conflict" description="In Ref. 1; AGK88256." evidence="8" ref="1">
    <original>F</original>
    <variation>Y</variation>
    <location>
        <position position="575"/>
    </location>
</feature>
<feature type="sequence conflict" description="In Ref. 1; AGK88256." evidence="8" ref="1">
    <original>HQHMG</original>
    <variation>RQHVR</variation>
    <location>
        <begin position="589"/>
        <end position="593"/>
    </location>
</feature>
<sequence>MSTISIHHVGILRNPLHSKSKRASINKPWSLSLPRSSSASRLVEPCRVSSKTDTKPAEITRRSGNYEPSLWDFDFIQSLDNHHPYVKEEQLKREEELIVQVKILLGTKMEAVKQLELIDDLKNLGLSYFFRDEIKTILTSIYNNSFENKNNQVGDLYFTSLGFRLLRQHGFNVSQDIFDCFKNEKGSDFDETLIGEDTKATLQLYEASFHLREGENTLELARQISTKYLQKKVNEGRISDENLSSWIRHSLDLPLHWRIQRLEARWFLDAYAVREDKNPLIFELAKLDFNIIQATQQEELKEVSRGWNDSCLAEKLPFVRDRVVESYFWGVGLFEGHEFGYQRKLTAANTLLISAIDDVYDVYGTLDELRLFTDVFRRWDTESIDQLPYYMQLCYLALYNYVSGVAYDILKDHRRNTIPYLQETWVELVEAYMKEAEWYKSGYTPSLEEYLTIAKISIASLTILLSVELSLPDSTIDRATFDRRHKMFYLSATVSRLADDLGTAPSELERGDVPKAIQCYMKDTNASEEEARGHVRFMIGETWKELNTAMAKPDDCPFTEQVVEATANLGRAAQFIYREGDGHGHFQIHQHMGNLFFHPYV</sequence>
<comment type="function">
    <text evidence="6">Involved in the biosynthesis of phenolic monoterpenes natural products (PubMed:23624978). Monoterpene synthase which catalyzes the conversion of geranyl diphosphate (GPP) to alpha-terpineol (isomer is not determined) (PubMed:23624978).</text>
</comment>
<comment type="catalytic activity">
    <reaction evidence="6">
        <text>(2E)-geranyl diphosphate + H2O = (S)-alpha-terpineol + diphosphate</text>
        <dbReference type="Rhea" id="RHEA:32551"/>
        <dbReference type="ChEBI" id="CHEBI:128"/>
        <dbReference type="ChEBI" id="CHEBI:15377"/>
        <dbReference type="ChEBI" id="CHEBI:33019"/>
        <dbReference type="ChEBI" id="CHEBI:58057"/>
    </reaction>
    <physiologicalReaction direction="left-to-right" evidence="6">
        <dbReference type="Rhea" id="RHEA:32552"/>
    </physiologicalReaction>
</comment>
<comment type="catalytic activity">
    <reaction evidence="6">
        <text>(2E)-geranyl diphosphate + H2O = (R)-alpha-terpineol + diphosphate</text>
        <dbReference type="Rhea" id="RHEA:32555"/>
        <dbReference type="ChEBI" id="CHEBI:300"/>
        <dbReference type="ChEBI" id="CHEBI:15377"/>
        <dbReference type="ChEBI" id="CHEBI:33019"/>
        <dbReference type="ChEBI" id="CHEBI:58057"/>
    </reaction>
    <physiologicalReaction direction="left-to-right" evidence="6">
        <dbReference type="Rhea" id="RHEA:32556"/>
    </physiologicalReaction>
</comment>
<comment type="cofactor">
    <cofactor evidence="3">
        <name>Mn(2+)</name>
        <dbReference type="ChEBI" id="CHEBI:29035"/>
    </cofactor>
    <cofactor evidence="3">
        <name>Mg(2+)</name>
        <dbReference type="ChEBI" id="CHEBI:18420"/>
    </cofactor>
    <text evidence="3">Binds 3 Mg(2+) or Mn(2+) ions per subunit.</text>
</comment>
<comment type="pathway">
    <text evidence="6">Secondary metabolite biosynthesis; terpenoid biosynthesis.</text>
</comment>
<comment type="subunit">
    <text evidence="1">Homodimer.</text>
</comment>
<comment type="subcellular location">
    <subcellularLocation>
        <location evidence="5">Plastid</location>
        <location evidence="5">Chloroplast</location>
    </subcellularLocation>
</comment>
<comment type="alternative products">
    <event type="alternative splicing"/>
    <isoform>
        <id>R4JQS2-1</id>
        <name>1</name>
        <sequence type="displayed"/>
    </isoform>
    <isoform>
        <id>R4JQS2-2</id>
        <name>2</name>
        <sequence type="described" ref="VSP_061123"/>
    </isoform>
</comment>
<comment type="domain">
    <text evidence="4">The Asp-Asp-Xaa-Xaa-Asp/Glu (DDXXD/E) motif is important for the catalytic activity, presumably through binding to Mg(2+).</text>
</comment>
<comment type="similarity">
    <text evidence="8">Belongs to the terpene synthase family.</text>
</comment>